<comment type="function">
    <text evidence="1">Catalyzes the ATP-dependent phosphorylation of N-acetyl-L-glutamate.</text>
</comment>
<comment type="catalytic activity">
    <reaction evidence="1">
        <text>N-acetyl-L-glutamate + ATP = N-acetyl-L-glutamyl 5-phosphate + ADP</text>
        <dbReference type="Rhea" id="RHEA:14629"/>
        <dbReference type="ChEBI" id="CHEBI:30616"/>
        <dbReference type="ChEBI" id="CHEBI:44337"/>
        <dbReference type="ChEBI" id="CHEBI:57936"/>
        <dbReference type="ChEBI" id="CHEBI:456216"/>
        <dbReference type="EC" id="2.7.2.8"/>
    </reaction>
</comment>
<comment type="pathway">
    <text evidence="1">Amino-acid biosynthesis; L-arginine biosynthesis; N(2)-acetyl-L-ornithine from L-glutamate: step 2/4.</text>
</comment>
<comment type="subcellular location">
    <subcellularLocation>
        <location evidence="1">Cytoplasm</location>
    </subcellularLocation>
</comment>
<comment type="similarity">
    <text evidence="1">Belongs to the acetylglutamate kinase family. ArgB subfamily.</text>
</comment>
<accession>B9L987</accession>
<evidence type="ECO:0000255" key="1">
    <source>
        <dbReference type="HAMAP-Rule" id="MF_00082"/>
    </source>
</evidence>
<dbReference type="EC" id="2.7.2.8" evidence="1"/>
<dbReference type="EMBL" id="CP001279">
    <property type="protein sequence ID" value="ACM93296.1"/>
    <property type="molecule type" value="Genomic_DNA"/>
</dbReference>
<dbReference type="RefSeq" id="WP_015902348.1">
    <property type="nucleotide sequence ID" value="NC_012115.1"/>
</dbReference>
<dbReference type="SMR" id="B9L987"/>
<dbReference type="STRING" id="598659.NAMH_0792"/>
<dbReference type="KEGG" id="nam:NAMH_0792"/>
<dbReference type="eggNOG" id="COG0548">
    <property type="taxonomic scope" value="Bacteria"/>
</dbReference>
<dbReference type="HOGENOM" id="CLU_053680_0_0_7"/>
<dbReference type="OrthoDB" id="9803155at2"/>
<dbReference type="UniPathway" id="UPA00068">
    <property type="reaction ID" value="UER00107"/>
</dbReference>
<dbReference type="Proteomes" id="UP000000448">
    <property type="component" value="Chromosome"/>
</dbReference>
<dbReference type="GO" id="GO:0005737">
    <property type="term" value="C:cytoplasm"/>
    <property type="evidence" value="ECO:0007669"/>
    <property type="project" value="UniProtKB-SubCell"/>
</dbReference>
<dbReference type="GO" id="GO:0003991">
    <property type="term" value="F:acetylglutamate kinase activity"/>
    <property type="evidence" value="ECO:0007669"/>
    <property type="project" value="UniProtKB-UniRule"/>
</dbReference>
<dbReference type="GO" id="GO:0005524">
    <property type="term" value="F:ATP binding"/>
    <property type="evidence" value="ECO:0007669"/>
    <property type="project" value="UniProtKB-UniRule"/>
</dbReference>
<dbReference type="GO" id="GO:0042450">
    <property type="term" value="P:arginine biosynthetic process via ornithine"/>
    <property type="evidence" value="ECO:0007669"/>
    <property type="project" value="UniProtKB-UniRule"/>
</dbReference>
<dbReference type="GO" id="GO:0006526">
    <property type="term" value="P:L-arginine biosynthetic process"/>
    <property type="evidence" value="ECO:0007669"/>
    <property type="project" value="UniProtKB-UniPathway"/>
</dbReference>
<dbReference type="CDD" id="cd04250">
    <property type="entry name" value="AAK_NAGK-C"/>
    <property type="match status" value="1"/>
</dbReference>
<dbReference type="FunFam" id="3.40.1160.10:FF:000004">
    <property type="entry name" value="Acetylglutamate kinase"/>
    <property type="match status" value="1"/>
</dbReference>
<dbReference type="Gene3D" id="3.40.1160.10">
    <property type="entry name" value="Acetylglutamate kinase-like"/>
    <property type="match status" value="1"/>
</dbReference>
<dbReference type="HAMAP" id="MF_00082">
    <property type="entry name" value="ArgB"/>
    <property type="match status" value="1"/>
</dbReference>
<dbReference type="InterPro" id="IPR036393">
    <property type="entry name" value="AceGlu_kinase-like_sf"/>
</dbReference>
<dbReference type="InterPro" id="IPR004662">
    <property type="entry name" value="AcgluKinase_fam"/>
</dbReference>
<dbReference type="InterPro" id="IPR037528">
    <property type="entry name" value="ArgB"/>
</dbReference>
<dbReference type="InterPro" id="IPR001048">
    <property type="entry name" value="Asp/Glu/Uridylate_kinase"/>
</dbReference>
<dbReference type="InterPro" id="IPR001057">
    <property type="entry name" value="Glu/AcGlu_kinase"/>
</dbReference>
<dbReference type="InterPro" id="IPR041727">
    <property type="entry name" value="NAGK-C"/>
</dbReference>
<dbReference type="NCBIfam" id="TIGR00761">
    <property type="entry name" value="argB"/>
    <property type="match status" value="1"/>
</dbReference>
<dbReference type="PANTHER" id="PTHR23342">
    <property type="entry name" value="N-ACETYLGLUTAMATE SYNTHASE"/>
    <property type="match status" value="1"/>
</dbReference>
<dbReference type="PANTHER" id="PTHR23342:SF0">
    <property type="entry name" value="N-ACETYLGLUTAMATE SYNTHASE, MITOCHONDRIAL"/>
    <property type="match status" value="1"/>
</dbReference>
<dbReference type="Pfam" id="PF00696">
    <property type="entry name" value="AA_kinase"/>
    <property type="match status" value="1"/>
</dbReference>
<dbReference type="PIRSF" id="PIRSF000728">
    <property type="entry name" value="NAGK"/>
    <property type="match status" value="1"/>
</dbReference>
<dbReference type="PRINTS" id="PR00474">
    <property type="entry name" value="GLU5KINASE"/>
</dbReference>
<dbReference type="SUPFAM" id="SSF53633">
    <property type="entry name" value="Carbamate kinase-like"/>
    <property type="match status" value="1"/>
</dbReference>
<protein>
    <recommendedName>
        <fullName evidence="1">Acetylglutamate kinase</fullName>
        <ecNumber evidence="1">2.7.2.8</ecNumber>
    </recommendedName>
    <alternativeName>
        <fullName evidence="1">N-acetyl-L-glutamate 5-phosphotransferase</fullName>
    </alternativeName>
    <alternativeName>
        <fullName evidence="1">NAG kinase</fullName>
        <shortName evidence="1">NAGK</shortName>
    </alternativeName>
</protein>
<feature type="chain" id="PRO_1000118357" description="Acetylglutamate kinase">
    <location>
        <begin position="1"/>
        <end position="280"/>
    </location>
</feature>
<feature type="binding site" evidence="1">
    <location>
        <begin position="64"/>
        <end position="65"/>
    </location>
    <ligand>
        <name>substrate</name>
    </ligand>
</feature>
<feature type="binding site" evidence="1">
    <location>
        <position position="86"/>
    </location>
    <ligand>
        <name>substrate</name>
    </ligand>
</feature>
<feature type="binding site" evidence="1">
    <location>
        <position position="177"/>
    </location>
    <ligand>
        <name>substrate</name>
    </ligand>
</feature>
<feature type="site" description="Transition state stabilizer" evidence="1">
    <location>
        <position position="29"/>
    </location>
</feature>
<feature type="site" description="Transition state stabilizer" evidence="1">
    <location>
        <position position="237"/>
    </location>
</feature>
<sequence>MQKKIETVKTLLDSLPFIRKFYGKTIVIKYGGSAQIDERLKESFAIDILMLYMVGIKPVIVHGGGKRITEILTALNVKTEFKDGVRVTTAESIKIAEMVLSGEINKEIVNMLNQHGAKAIGINGKDMSFMKAKSLVGYTGEITSIDGVFVNKLLSESLIPVIAPIAAGDSATHPGYNINADTAASEIAAAIDAKRVIFLTDTPGVLDKGKNLISSLTKEEIEKLKQDGTIAGGMIPKVDAALRAVERGVEKAHIIDGRIEHSILLELLTSEGIGTEIKES</sequence>
<gene>
    <name evidence="1" type="primary">argB</name>
    <name type="ordered locus">NAMH_0792</name>
</gene>
<proteinExistence type="inferred from homology"/>
<reference key="1">
    <citation type="journal article" date="2009" name="PLoS Genet.">
        <title>Adaptations to submarine hydrothermal environments exemplified by the genome of Nautilia profundicola.</title>
        <authorList>
            <person name="Campbell B.J."/>
            <person name="Smith J.L."/>
            <person name="Hanson T.E."/>
            <person name="Klotz M.G."/>
            <person name="Stein L.Y."/>
            <person name="Lee C.K."/>
            <person name="Wu D."/>
            <person name="Robinson J.M."/>
            <person name="Khouri H.M."/>
            <person name="Eisen J.A."/>
            <person name="Cary S.C."/>
        </authorList>
    </citation>
    <scope>NUCLEOTIDE SEQUENCE [LARGE SCALE GENOMIC DNA]</scope>
    <source>
        <strain>ATCC BAA-1463 / DSM 18972 / AmH</strain>
    </source>
</reference>
<organism>
    <name type="scientific">Nautilia profundicola (strain ATCC BAA-1463 / DSM 18972 / AmH)</name>
    <dbReference type="NCBI Taxonomy" id="598659"/>
    <lineage>
        <taxon>Bacteria</taxon>
        <taxon>Pseudomonadati</taxon>
        <taxon>Campylobacterota</taxon>
        <taxon>Epsilonproteobacteria</taxon>
        <taxon>Nautiliales</taxon>
        <taxon>Nautiliaceae</taxon>
        <taxon>Nautilia</taxon>
    </lineage>
</organism>
<name>ARGB_NAUPA</name>
<keyword id="KW-0028">Amino-acid biosynthesis</keyword>
<keyword id="KW-0055">Arginine biosynthesis</keyword>
<keyword id="KW-0067">ATP-binding</keyword>
<keyword id="KW-0963">Cytoplasm</keyword>
<keyword id="KW-0418">Kinase</keyword>
<keyword id="KW-0547">Nucleotide-binding</keyword>
<keyword id="KW-0808">Transferase</keyword>